<dbReference type="EMBL" id="AE003853">
    <property type="protein sequence ID" value="AAF95934.1"/>
    <property type="molecule type" value="Genomic_DNA"/>
</dbReference>
<dbReference type="PIR" id="H82511">
    <property type="entry name" value="H82511"/>
</dbReference>
<dbReference type="RefSeq" id="NP_232421.1">
    <property type="nucleotide sequence ID" value="NC_002506.1"/>
</dbReference>
<dbReference type="RefSeq" id="WP_000070352.1">
    <property type="nucleotide sequence ID" value="NZ_LT906615.1"/>
</dbReference>
<dbReference type="STRING" id="243277.VC_A0020"/>
<dbReference type="TCDB" id="1.C.131.1.1">
    <property type="family name" value="the vasx toxin (vasx) family"/>
</dbReference>
<dbReference type="DNASU" id="2612513"/>
<dbReference type="EnsemblBacteria" id="AAF95934">
    <property type="protein sequence ID" value="AAF95934"/>
    <property type="gene ID" value="VC_A0020"/>
</dbReference>
<dbReference type="KEGG" id="vch:VC_A0020"/>
<dbReference type="PATRIC" id="fig|243277.26.peg.2667"/>
<dbReference type="eggNOG" id="ENOG502ZW1U">
    <property type="taxonomic scope" value="Bacteria"/>
</dbReference>
<dbReference type="HOGENOM" id="CLU_009101_0_0_6"/>
<dbReference type="Proteomes" id="UP000000584">
    <property type="component" value="Chromosome 2"/>
</dbReference>
<dbReference type="GO" id="GO:0005576">
    <property type="term" value="C:extracellular region"/>
    <property type="evidence" value="ECO:0007669"/>
    <property type="project" value="UniProtKB-SubCell"/>
</dbReference>
<dbReference type="GO" id="GO:0033644">
    <property type="term" value="C:host cell membrane"/>
    <property type="evidence" value="ECO:0007669"/>
    <property type="project" value="UniProtKB-SubCell"/>
</dbReference>
<dbReference type="GO" id="GO:0016020">
    <property type="term" value="C:membrane"/>
    <property type="evidence" value="ECO:0007669"/>
    <property type="project" value="UniProtKB-KW"/>
</dbReference>
<dbReference type="CDD" id="cd20708">
    <property type="entry name" value="MIX_IV"/>
    <property type="match status" value="1"/>
</dbReference>
<dbReference type="InterPro" id="IPR048126">
    <property type="entry name" value="Toxin_VasX"/>
</dbReference>
<dbReference type="InterPro" id="IPR046864">
    <property type="entry name" value="VasX_N"/>
</dbReference>
<dbReference type="NCBIfam" id="NF041559">
    <property type="entry name" value="BTH_I2691_fam"/>
    <property type="match status" value="1"/>
</dbReference>
<dbReference type="Pfam" id="PF20249">
    <property type="entry name" value="VasX_N"/>
    <property type="match status" value="1"/>
</dbReference>
<gene>
    <name evidence="5" type="primary">vasX</name>
    <name type="ordered locus">VC_A0020</name>
</gene>
<feature type="chain" id="PRO_0000449209" description="Toxin VasX">
    <location>
        <begin position="1"/>
        <end position="1085"/>
    </location>
</feature>
<feature type="transmembrane region" description="Helical" evidence="1">
    <location>
        <begin position="753"/>
        <end position="773"/>
    </location>
</feature>
<feature type="transmembrane region" description="Helical" evidence="1">
    <location>
        <begin position="813"/>
        <end position="833"/>
    </location>
</feature>
<feature type="transmembrane region" description="Helical" evidence="1">
    <location>
        <begin position="860"/>
        <end position="880"/>
    </location>
</feature>
<feature type="transmembrane region" description="Helical" evidence="1">
    <location>
        <begin position="884"/>
        <end position="904"/>
    </location>
</feature>
<feature type="region of interest" description="Disordered" evidence="2">
    <location>
        <begin position="1"/>
        <end position="20"/>
    </location>
</feature>
<comment type="function">
    <text evidence="3 4">Toxin secreted by the type VI (T6SS) secretion system that acts on prokaryotic target cells. Acts in conjunction with VasW, an accessory protein to VasX, to compromise the inner membrane of prokaryotic target cells.</text>
</comment>
<comment type="subcellular location">
    <subcellularLocation>
        <location evidence="4">Secreted</location>
    </subcellularLocation>
    <subcellularLocation>
        <location evidence="1">Host membrane</location>
        <topology evidence="1">Multi-pass membrane protein</topology>
    </subcellularLocation>
    <text evidence="3">Delivered to the target cell by the type VI (T6SS) secretion system.</text>
</comment>
<comment type="disruption phenotype">
    <text evidence="3">Deletion of vasX gene together with deletion of vgrG3 fail to kill Escherichia coli.</text>
</comment>
<organism>
    <name type="scientific">Vibrio cholerae serotype O1 (strain ATCC 39315 / El Tor Inaba N16961)</name>
    <dbReference type="NCBI Taxonomy" id="243277"/>
    <lineage>
        <taxon>Bacteria</taxon>
        <taxon>Pseudomonadati</taxon>
        <taxon>Pseudomonadota</taxon>
        <taxon>Gammaproteobacteria</taxon>
        <taxon>Vibrionales</taxon>
        <taxon>Vibrionaceae</taxon>
        <taxon>Vibrio</taxon>
    </lineage>
</organism>
<keyword id="KW-1043">Host membrane</keyword>
<keyword id="KW-0472">Membrane</keyword>
<keyword id="KW-1185">Reference proteome</keyword>
<keyword id="KW-0964">Secreted</keyword>
<keyword id="KW-0812">Transmembrane</keyword>
<keyword id="KW-1133">Transmembrane helix</keyword>
<keyword id="KW-0843">Virulence</keyword>
<protein>
    <recommendedName>
        <fullName evidence="5">Toxin VasX</fullName>
    </recommendedName>
</protein>
<evidence type="ECO:0000255" key="1"/>
<evidence type="ECO:0000256" key="2">
    <source>
        <dbReference type="SAM" id="MobiDB-lite"/>
    </source>
</evidence>
<evidence type="ECO:0000269" key="3">
    <source>
    </source>
</evidence>
<evidence type="ECO:0000269" key="4">
    <source>
    </source>
</evidence>
<evidence type="ECO:0000303" key="5">
    <source>
    </source>
</evidence>
<name>VASX_VIBCH</name>
<accession>Q9KNE5</accession>
<reference key="1">
    <citation type="journal article" date="2000" name="Nature">
        <title>DNA sequence of both chromosomes of the cholera pathogen Vibrio cholerae.</title>
        <authorList>
            <person name="Heidelberg J.F."/>
            <person name="Eisen J.A."/>
            <person name="Nelson W.C."/>
            <person name="Clayton R.A."/>
            <person name="Gwinn M.L."/>
            <person name="Dodson R.J."/>
            <person name="Haft D.H."/>
            <person name="Hickey E.K."/>
            <person name="Peterson J.D."/>
            <person name="Umayam L.A."/>
            <person name="Gill S.R."/>
            <person name="Nelson K.E."/>
            <person name="Read T.D."/>
            <person name="Tettelin H."/>
            <person name="Richardson D.L."/>
            <person name="Ermolaeva M.D."/>
            <person name="Vamathevan J.J."/>
            <person name="Bass S."/>
            <person name="Qin H."/>
            <person name="Dragoi I."/>
            <person name="Sellers P."/>
            <person name="McDonald L.A."/>
            <person name="Utterback T.R."/>
            <person name="Fleischmann R.D."/>
            <person name="Nierman W.C."/>
            <person name="White O."/>
            <person name="Salzberg S.L."/>
            <person name="Smith H.O."/>
            <person name="Colwell R.R."/>
            <person name="Mekalanos J.J."/>
            <person name="Venter J.C."/>
            <person name="Fraser C.M."/>
        </authorList>
    </citation>
    <scope>NUCLEOTIDE SEQUENCE [LARGE SCALE GENOMIC DNA]</scope>
    <source>
        <strain>ATCC 39315 / El Tor Inaba N16961</strain>
    </source>
</reference>
<reference key="2">
    <citation type="journal article" date="2013" name="PLoS Pathog.">
        <title>Dual expression profile of type VI secretion system immunity genes protects pandemic Vibrio cholerae.</title>
        <authorList>
            <person name="Miyata S.T."/>
            <person name="Unterweger D."/>
            <person name="Rudko S.P."/>
            <person name="Pukatzki S."/>
        </authorList>
    </citation>
    <scope>FUNCTION</scope>
    <scope>SUBCELLULAR LOCATION</scope>
</reference>
<reference key="3">
    <citation type="journal article" date="2013" name="Proc. Natl. Acad. Sci. U.S.A.">
        <title>Identification of T6SS-dependent effector and immunity proteins by Tn-seq in Vibrio cholerae.</title>
        <authorList>
            <person name="Dong T.G."/>
            <person name="Ho B.T."/>
            <person name="Yoder-Himes D.R."/>
            <person name="Mekalanos J.J."/>
        </authorList>
    </citation>
    <scope>FUNCTION</scope>
    <scope>DISRUPTION PHENOTYPE</scope>
</reference>
<sequence>MSNPNQAAKTGQTNDAQNPASACPFKQPLIGIIPVRYAFDVYDDQGQALHPLPKADRQWKGQFSIKQRSYTLRQLRDGWLYVYDETAKTLHEYEVVGCKLTKIDWSDDEANKPTHERGSKGESKSCLLYPAQHTLSIGYAHQRWTWRVCEHMRSNTSSRHAVMRKVSLKQFESNGTHPHAHFAQYLEDYVADIGTPAEQDIFKDTCTPSLPVEKSEEAVKGTEFKFVADKAVVSSSDYLQDLPEQNCGLFVALNDPLADVSDLFVTFTTQVAKRTKAIGDETQQHKMQMAELTRTLGRIRLEEKEIPDFVKQDPIRILELERAITEYCATAKLAEIESHHLASEGHSPSGNYALMQQQAEQKLAELKTLYRFEPTSAQMRKWRKKDNSFIDEVRWADLDNFLVEHYTELKGLDEQIKQHYAQFMSAFNQLGLDPLLFGMDNQDEVQQAYLLALTSQFLVVVTQVNHDEKSLEILKKDLSFDSPKNLMALASTGFSLQANQAINNHIQGFSTAFLSTSNPSDMVAFATAIANWDTFTGDERIQEKAWFKRWIEPAQSSFGALQKAVANQAKESWQAVMELLFPYQNQPKGGTPSLLANLRLLLVESLVREEAVLQHNPKYAAELKQFETKLNAILQEMNDALELKPGNVSPKNHQIATAQSAQRKLGQLLSSELPMMLTLKNQAAMNTFQQSVNEKLSALSKNVKTSSASVSQKLGGLGGLLFALNLWNTMTVLENIRYKVAQYPSWNPFKNPALGEAIYATGNTIVVAGAISAGRAWVTIAEQGLLDRTLKNALNTTKVLGTKDALKTFAKSIALVATVGMIASALETWESWGKFNDSSKTDLERFGYLLKAGATGAQGIIFYIQFFTLLGSGIGGPSIAAISAGWMLAGFAVIGIVYLIGVILTNVFKRSELEIWLSKSTWGKESAHWPVGKELTELEHLLHRPSLRLSQVTQRKAAQWMDSGSLQWQLELTLPDYLKGQTIGLQITRLPAQPAYYQPQREAVTPILINEQQGKWSIEDNQPVYRITLGGSEKDTVGVCVALPLRWGKELSLKFYASGTRAGELDLQSAEANDIATRNLVVGKG</sequence>
<proteinExistence type="inferred from homology"/>